<evidence type="ECO:0000250" key="1"/>
<evidence type="ECO:0000305" key="2"/>
<protein>
    <recommendedName>
        <fullName>Uncharacterized protein in mprR 3'region</fullName>
        <ecNumber>1.-.-.-</ecNumber>
    </recommendedName>
    <alternativeName>
        <fullName>ORF5</fullName>
    </alternativeName>
</protein>
<organism>
    <name type="scientific">Streptomyces coelicolor</name>
    <dbReference type="NCBI Taxonomy" id="1902"/>
    <lineage>
        <taxon>Bacteria</taxon>
        <taxon>Bacillati</taxon>
        <taxon>Actinomycetota</taxon>
        <taxon>Actinomycetes</taxon>
        <taxon>Kitasatosporales</taxon>
        <taxon>Streptomycetaceae</taxon>
        <taxon>Streptomyces</taxon>
        <taxon>Streptomyces albidoflavus group</taxon>
    </lineage>
</organism>
<keyword id="KW-0520">NAD</keyword>
<keyword id="KW-0560">Oxidoreductase</keyword>
<name>YMP5_STRCH</name>
<reference key="1">
    <citation type="journal article" date="1992" name="Mol. Microbiol.">
        <title>A metalloprotease gene from Streptomyces coelicolor 'Muller' and its transcriptional activator, a member of the LysR family.</title>
        <authorList>
            <person name="Dammann T."/>
            <person name="Wohlleben W."/>
        </authorList>
    </citation>
    <scope>NUCLEOTIDE SEQUENCE [GENOMIC DNA]</scope>
    <source>
        <strain>DSM 3030 / Mueller</strain>
    </source>
</reference>
<dbReference type="EC" id="1.-.-.-"/>
<dbReference type="EMBL" id="Z11929">
    <property type="protein sequence ID" value="CAA77987.1"/>
    <property type="molecule type" value="Genomic_DNA"/>
</dbReference>
<dbReference type="PIR" id="S25189">
    <property type="entry name" value="S25189"/>
</dbReference>
<dbReference type="SMR" id="P43169"/>
<dbReference type="GO" id="GO:0051287">
    <property type="term" value="F:NAD binding"/>
    <property type="evidence" value="ECO:0007669"/>
    <property type="project" value="InterPro"/>
</dbReference>
<dbReference type="GO" id="GO:0016491">
    <property type="term" value="F:oxidoreductase activity"/>
    <property type="evidence" value="ECO:0007669"/>
    <property type="project" value="UniProtKB-KW"/>
</dbReference>
<dbReference type="Gene3D" id="3.40.50.720">
    <property type="entry name" value="NAD(P)-binding Rossmann-like Domain"/>
    <property type="match status" value="2"/>
</dbReference>
<dbReference type="InterPro" id="IPR006140">
    <property type="entry name" value="D-isomer_DH_NAD-bd"/>
</dbReference>
<dbReference type="InterPro" id="IPR036291">
    <property type="entry name" value="NAD(P)-bd_dom_sf"/>
</dbReference>
<dbReference type="PANTHER" id="PTHR43333">
    <property type="entry name" value="2-HACID_DH_C DOMAIN-CONTAINING PROTEIN"/>
    <property type="match status" value="1"/>
</dbReference>
<dbReference type="PANTHER" id="PTHR43333:SF1">
    <property type="entry name" value="D-ISOMER SPECIFIC 2-HYDROXYACID DEHYDROGENASE NAD-BINDING DOMAIN-CONTAINING PROTEIN"/>
    <property type="match status" value="1"/>
</dbReference>
<dbReference type="Pfam" id="PF02826">
    <property type="entry name" value="2-Hacid_dh_C"/>
    <property type="match status" value="1"/>
</dbReference>
<dbReference type="SUPFAM" id="SSF51735">
    <property type="entry name" value="NAD(P)-binding Rossmann-fold domains"/>
    <property type="match status" value="1"/>
</dbReference>
<proteinExistence type="inferred from homology"/>
<feature type="chain" id="PRO_0000076035" description="Uncharacterized protein in mprR 3'region">
    <location>
        <begin position="1" status="less than"/>
        <end position="278"/>
    </location>
</feature>
<feature type="active site" evidence="1">
    <location>
        <position position="193"/>
    </location>
</feature>
<feature type="active site" evidence="1">
    <location>
        <position position="222"/>
    </location>
</feature>
<feature type="active site" description="Proton donor" evidence="1">
    <location>
        <position position="241"/>
    </location>
</feature>
<feature type="binding site" evidence="1">
    <location>
        <begin position="112"/>
        <end position="113"/>
    </location>
    <ligand>
        <name>NAD(+)</name>
        <dbReference type="ChEBI" id="CHEBI:57540"/>
    </ligand>
</feature>
<feature type="binding site" evidence="1">
    <location>
        <begin position="191"/>
        <end position="193"/>
    </location>
    <ligand>
        <name>NAD(+)</name>
        <dbReference type="ChEBI" id="CHEBI:57540"/>
    </ligand>
</feature>
<feature type="binding site" evidence="1">
    <location>
        <position position="217"/>
    </location>
    <ligand>
        <name>NAD(+)</name>
        <dbReference type="ChEBI" id="CHEBI:57540"/>
    </ligand>
</feature>
<feature type="binding site" evidence="1">
    <location>
        <begin position="241"/>
        <end position="244"/>
    </location>
    <ligand>
        <name>NAD(+)</name>
        <dbReference type="ChEBI" id="CHEBI:57540"/>
    </ligand>
</feature>
<feature type="non-terminal residue">
    <location>
        <position position="1"/>
    </location>
</feature>
<comment type="similarity">
    <text evidence="2">Belongs to the D-isomer specific 2-hydroxyacid dehydrogenase family.</text>
</comment>
<sequence>ITGAEGGAPDAPLVLVGAHPAARLRGDPRVRWFHSVNAGVDALLDGGWPAGVLLTRTVGRMGERIGQYALAWVLADCQGVPGHLARTAAPPGAANPPNWPRGQTALVYGTGHIGTAVASRLGAAGLHTVGVGRAEHAPGGPFDERITAGEDGPWLGRARFVVDALPLTDATRDFFADARLSALRGATFLNVGRGATVSLPALGRALAAGHVRGAVLDVLTDEPPAPGHPVWELPRTTLTSHSAGITAGTDITADFRACWEALRAGQAPELAVRVGRGY</sequence>
<accession>P43169</accession>